<organism>
    <name type="scientific">Escherichia coli (strain K12)</name>
    <dbReference type="NCBI Taxonomy" id="83333"/>
    <lineage>
        <taxon>Bacteria</taxon>
        <taxon>Pseudomonadati</taxon>
        <taxon>Pseudomonadota</taxon>
        <taxon>Gammaproteobacteria</taxon>
        <taxon>Enterobacterales</taxon>
        <taxon>Enterobacteriaceae</taxon>
        <taxon>Escherichia</taxon>
    </lineage>
</organism>
<gene>
    <name type="primary">ytiA</name>
    <name type="ordered locus">b4715</name>
</gene>
<sequence length="85" mass="9556">MKEFLFLFHSTVGVIQTRKALQAAGMTFRVSDIPRDLRGGCGLCIWLTCPPGEEIQWVIPGLTESIYCQQDGVWRCIAHYGVSPR</sequence>
<proteinExistence type="predicted"/>
<keyword id="KW-1185">Reference proteome</keyword>
<name>YTIA_ECOLI</name>
<dbReference type="EMBL" id="U00096">
    <property type="protein sequence ID" value="AYC08261.1"/>
    <property type="molecule type" value="Genomic_DNA"/>
</dbReference>
<dbReference type="RefSeq" id="WP_000657675.1">
    <property type="nucleotide sequence ID" value="NZ_LN832404.1"/>
</dbReference>
<dbReference type="FunCoup" id="P0DN74">
    <property type="interactions" value="3"/>
</dbReference>
<dbReference type="EnsemblBacteria" id="AYC08261">
    <property type="protein sequence ID" value="AYC08261"/>
    <property type="gene ID" value="b4715"/>
</dbReference>
<dbReference type="KEGG" id="ecoc:C3026_23425"/>
<dbReference type="PATRIC" id="fig|83333.103.peg.664"/>
<dbReference type="InParanoid" id="P0DN74"/>
<dbReference type="OrthoDB" id="5589216at2"/>
<dbReference type="BioCyc" id="EcoCyc:MONOMER0-4349"/>
<dbReference type="PRO" id="PR:P0DN74"/>
<dbReference type="Proteomes" id="UP000000625">
    <property type="component" value="Chromosome"/>
</dbReference>
<dbReference type="InterPro" id="IPR021778">
    <property type="entry name" value="Se/S_carrier-like"/>
</dbReference>
<dbReference type="Pfam" id="PF11823">
    <property type="entry name" value="Se_S_carrier"/>
    <property type="match status" value="1"/>
</dbReference>
<reference key="1">
    <citation type="journal article" date="1997" name="Science">
        <title>The complete genome sequence of Escherichia coli K-12.</title>
        <authorList>
            <person name="Blattner F.R."/>
            <person name="Plunkett G. III"/>
            <person name="Bloch C.A."/>
            <person name="Perna N.T."/>
            <person name="Burland V."/>
            <person name="Riley M."/>
            <person name="Collado-Vides J."/>
            <person name="Glasner J.D."/>
            <person name="Rode C.K."/>
            <person name="Mayhew G.F."/>
            <person name="Gregor J."/>
            <person name="Davis N.W."/>
            <person name="Kirkpatrick H.A."/>
            <person name="Goeden M.A."/>
            <person name="Rose D.J."/>
            <person name="Mau B."/>
            <person name="Shao Y."/>
        </authorList>
    </citation>
    <scope>NUCLEOTIDE SEQUENCE [LARGE SCALE GENOMIC DNA]</scope>
    <source>
        <strain>K12 / MG1655 / ATCC 47076</strain>
    </source>
</reference>
<accession>P0DN74</accession>
<accession>A0A385XMT1</accession>
<protein>
    <recommendedName>
        <fullName>Uncharacterized protein YtiA</fullName>
    </recommendedName>
</protein>
<feature type="chain" id="PRO_0000435355" description="Uncharacterized protein YtiA">
    <location>
        <begin position="1"/>
        <end position="85"/>
    </location>
</feature>